<sequence>MLKVIVETKTLVQALGFASSVVEKRNIISELANIKLLAKDGLLELSSTNMDLYLSQKIGVQVVSEGELTVSTKTLNDIVKKLPDSELTLTDLGTTGLEITGKNCRFNLFTLPVESFPVMDNINPEASFKISCAEFAKIIESTKFSVSLDETRYNLNGIYLHVKDSEFYAASTDGHRLSVSSVVLAEKIEDFGVILPQKSAEEILKIVKDSKNANADIEILLSSNKIKFICNENVIMLSKLIDGTFPDYSSFIPENSSSKLVINRKIFADTIERIAIITVEKFRAVKLSLSGEALEISAIGEARGNAKEVINSSKETENFYEYSGETNLDIGFNPQYLEDVLKAIKSDLVELYFSSVSAPVLIKFPESPKDIFVVMPVKV</sequence>
<evidence type="ECO:0000250" key="1">
    <source>
        <dbReference type="UniProtKB" id="P0A988"/>
    </source>
</evidence>
<evidence type="ECO:0000305" key="2"/>
<evidence type="ECO:0007829" key="3">
    <source>
        <dbReference type="PDB" id="6MAN"/>
    </source>
</evidence>
<comment type="function">
    <text evidence="1">Confers DNA tethering and processivity to DNA polymerases and other proteins. Acts as a clamp, forming a ring around DNA (a reaction catalyzed by the clamp-loading complex) which diffuses in an ATP-independent manner freely and bidirectionally along dsDNA. Initially characterized for its ability to contact the catalytic subunit of DNA polymerase III (Pol III), a complex, multichain enzyme responsible for most of the replicative synthesis in bacteria; Pol III exhibits 3'-5' exonuclease proofreading activity. The beta chain is required for initiation of replication as well as for processivity of DNA replication.</text>
</comment>
<comment type="subunit">
    <text evidence="1">Forms a ring-shaped head-to-tail homodimer around DNA which binds and tethers DNA polymerases and other proteins to the DNA. The DNA replisome complex has a single clamp-loading complex (3 tau and 1 each of delta, delta', psi and chi subunits) which binds 3 Pol III cores (1 core on the leading strand and 2 on the lagging strand) each with a beta sliding clamp dimer. Additional proteins in the replisome are other copies of gamma, psi and chi, Ssb, DNA helicase and RNA primase.</text>
</comment>
<comment type="subcellular location">
    <subcellularLocation>
        <location evidence="1">Cytoplasm</location>
    </subcellularLocation>
</comment>
<comment type="similarity">
    <text evidence="2">Belongs to the beta sliding clamp family.</text>
</comment>
<feature type="chain" id="PRO_0000280790" description="Beta sliding clamp">
    <location>
        <begin position="1"/>
        <end position="379"/>
    </location>
</feature>
<feature type="strand" evidence="3">
    <location>
        <begin position="3"/>
        <end position="7"/>
    </location>
</feature>
<feature type="helix" evidence="3">
    <location>
        <begin position="8"/>
        <end position="21"/>
    </location>
</feature>
<feature type="helix" evidence="3">
    <location>
        <begin position="29"/>
        <end position="32"/>
    </location>
</feature>
<feature type="strand" evidence="3">
    <location>
        <begin position="33"/>
        <end position="39"/>
    </location>
</feature>
<feature type="strand" evidence="3">
    <location>
        <begin position="42"/>
        <end position="48"/>
    </location>
</feature>
<feature type="strand" evidence="3">
    <location>
        <begin position="50"/>
        <end position="59"/>
    </location>
</feature>
<feature type="strand" evidence="3">
    <location>
        <begin position="61"/>
        <end position="64"/>
    </location>
</feature>
<feature type="strand" evidence="3">
    <location>
        <begin position="66"/>
        <end position="71"/>
    </location>
</feature>
<feature type="helix" evidence="3">
    <location>
        <begin position="72"/>
        <end position="79"/>
    </location>
</feature>
<feature type="strand" evidence="3">
    <location>
        <begin position="85"/>
        <end position="91"/>
    </location>
</feature>
<feature type="helix" evidence="3">
    <location>
        <begin position="93"/>
        <end position="95"/>
    </location>
</feature>
<feature type="strand" evidence="3">
    <location>
        <begin position="97"/>
        <end position="101"/>
    </location>
</feature>
<feature type="strand" evidence="3">
    <location>
        <begin position="104"/>
        <end position="108"/>
    </location>
</feature>
<feature type="strand" evidence="3">
    <location>
        <begin position="125"/>
        <end position="131"/>
    </location>
</feature>
<feature type="helix" evidence="3">
    <location>
        <begin position="132"/>
        <end position="140"/>
    </location>
</feature>
<feature type="helix" evidence="3">
    <location>
        <begin position="143"/>
        <end position="145"/>
    </location>
</feature>
<feature type="helix" evidence="3">
    <location>
        <begin position="153"/>
        <end position="155"/>
    </location>
</feature>
<feature type="strand" evidence="3">
    <location>
        <begin position="156"/>
        <end position="163"/>
    </location>
</feature>
<feature type="strand" evidence="3">
    <location>
        <begin position="166"/>
        <end position="172"/>
    </location>
</feature>
<feature type="strand" evidence="3">
    <location>
        <begin position="174"/>
        <end position="183"/>
    </location>
</feature>
<feature type="strand" evidence="3">
    <location>
        <begin position="191"/>
        <end position="196"/>
    </location>
</feature>
<feature type="helix" evidence="3">
    <location>
        <begin position="197"/>
        <end position="208"/>
    </location>
</feature>
<feature type="turn" evidence="3">
    <location>
        <begin position="210"/>
        <end position="214"/>
    </location>
</feature>
<feature type="strand" evidence="3">
    <location>
        <begin position="215"/>
        <end position="221"/>
    </location>
</feature>
<feature type="strand" evidence="3">
    <location>
        <begin position="223"/>
        <end position="230"/>
    </location>
</feature>
<feature type="turn" evidence="3">
    <location>
        <begin position="231"/>
        <end position="233"/>
    </location>
</feature>
<feature type="strand" evidence="3">
    <location>
        <begin position="234"/>
        <end position="239"/>
    </location>
</feature>
<feature type="helix" evidence="3">
    <location>
        <begin position="248"/>
        <end position="251"/>
    </location>
</feature>
<feature type="strand" evidence="3">
    <location>
        <begin position="258"/>
        <end position="263"/>
    </location>
</feature>
<feature type="helix" evidence="3">
    <location>
        <begin position="264"/>
        <end position="275"/>
    </location>
</feature>
<feature type="strand" evidence="3">
    <location>
        <begin position="285"/>
        <end position="289"/>
    </location>
</feature>
<feature type="strand" evidence="3">
    <location>
        <begin position="291"/>
        <end position="300"/>
    </location>
</feature>
<feature type="turn" evidence="3">
    <location>
        <begin position="301"/>
        <end position="303"/>
    </location>
</feature>
<feature type="strand" evidence="3">
    <location>
        <begin position="304"/>
        <end position="311"/>
    </location>
</feature>
<feature type="helix" evidence="3">
    <location>
        <begin position="316"/>
        <end position="318"/>
    </location>
</feature>
<feature type="strand" evidence="3">
    <location>
        <begin position="320"/>
        <end position="323"/>
    </location>
</feature>
<feature type="strand" evidence="3">
    <location>
        <begin position="328"/>
        <end position="332"/>
    </location>
</feature>
<feature type="helix" evidence="3">
    <location>
        <begin position="334"/>
        <end position="341"/>
    </location>
</feature>
<feature type="strand" evidence="3">
    <location>
        <begin position="347"/>
        <end position="353"/>
    </location>
</feature>
<feature type="strand" evidence="3">
    <location>
        <begin position="360"/>
        <end position="364"/>
    </location>
</feature>
<feature type="strand" evidence="3">
    <location>
        <begin position="367"/>
        <end position="374"/>
    </location>
</feature>
<gene>
    <name type="primary">dnaN</name>
    <name type="ordered locus">RBE_0656</name>
</gene>
<proteinExistence type="evidence at protein level"/>
<name>DPO3B_RICBR</name>
<organism>
    <name type="scientific">Rickettsia bellii (strain RML369-C)</name>
    <dbReference type="NCBI Taxonomy" id="336407"/>
    <lineage>
        <taxon>Bacteria</taxon>
        <taxon>Pseudomonadati</taxon>
        <taxon>Pseudomonadota</taxon>
        <taxon>Alphaproteobacteria</taxon>
        <taxon>Rickettsiales</taxon>
        <taxon>Rickettsiaceae</taxon>
        <taxon>Rickettsieae</taxon>
        <taxon>Rickettsia</taxon>
        <taxon>belli group</taxon>
    </lineage>
</organism>
<reference key="1">
    <citation type="journal article" date="2006" name="PLoS Genet.">
        <title>Genome sequence of Rickettsia bellii illuminates the role of amoebae in gene exchanges between intracellular pathogens.</title>
        <authorList>
            <person name="Ogata H."/>
            <person name="La Scola B."/>
            <person name="Audic S."/>
            <person name="Renesto P."/>
            <person name="Blanc G."/>
            <person name="Robert C."/>
            <person name="Fournier P.-E."/>
            <person name="Claverie J.-M."/>
            <person name="Raoult D."/>
        </authorList>
    </citation>
    <scope>NUCLEOTIDE SEQUENCE [LARGE SCALE GENOMIC DNA]</scope>
    <source>
        <strain>RML369-C</strain>
    </source>
</reference>
<accession>Q1RIS7</accession>
<protein>
    <recommendedName>
        <fullName>Beta sliding clamp</fullName>
        <shortName>Beta clamp</shortName>
        <shortName>Sliding clamp</shortName>
    </recommendedName>
    <alternativeName>
        <fullName>Beta-clamp processivity factor</fullName>
    </alternativeName>
    <alternativeName>
        <fullName>DNA polymerase III beta sliding clamp subunit</fullName>
    </alternativeName>
    <alternativeName>
        <fullName>DNA polymerase III subunit beta</fullName>
    </alternativeName>
</protein>
<dbReference type="EMBL" id="CP000087">
    <property type="protein sequence ID" value="ABE04737.1"/>
    <property type="molecule type" value="Genomic_DNA"/>
</dbReference>
<dbReference type="RefSeq" id="WP_011477325.1">
    <property type="nucleotide sequence ID" value="NC_007940.1"/>
</dbReference>
<dbReference type="PDB" id="6MAN">
    <property type="method" value="X-ray"/>
    <property type="resolution" value="2.35 A"/>
    <property type="chains" value="A/B=1-379"/>
</dbReference>
<dbReference type="PDBsum" id="6MAN"/>
<dbReference type="SMR" id="Q1RIS7"/>
<dbReference type="KEGG" id="rbe:RBE_0656"/>
<dbReference type="eggNOG" id="COG0592">
    <property type="taxonomic scope" value="Bacteria"/>
</dbReference>
<dbReference type="HOGENOM" id="CLU_038149_4_2_5"/>
<dbReference type="OrthoDB" id="8421503at2"/>
<dbReference type="Proteomes" id="UP000001951">
    <property type="component" value="Chromosome"/>
</dbReference>
<dbReference type="GO" id="GO:0005737">
    <property type="term" value="C:cytoplasm"/>
    <property type="evidence" value="ECO:0007669"/>
    <property type="project" value="UniProtKB-SubCell"/>
</dbReference>
<dbReference type="GO" id="GO:0009360">
    <property type="term" value="C:DNA polymerase III complex"/>
    <property type="evidence" value="ECO:0007669"/>
    <property type="project" value="InterPro"/>
</dbReference>
<dbReference type="GO" id="GO:0008408">
    <property type="term" value="F:3'-5' exonuclease activity"/>
    <property type="evidence" value="ECO:0007669"/>
    <property type="project" value="InterPro"/>
</dbReference>
<dbReference type="GO" id="GO:0003677">
    <property type="term" value="F:DNA binding"/>
    <property type="evidence" value="ECO:0007669"/>
    <property type="project" value="UniProtKB-KW"/>
</dbReference>
<dbReference type="GO" id="GO:0003887">
    <property type="term" value="F:DNA-directed DNA polymerase activity"/>
    <property type="evidence" value="ECO:0007669"/>
    <property type="project" value="UniProtKB-KW"/>
</dbReference>
<dbReference type="GO" id="GO:0006271">
    <property type="term" value="P:DNA strand elongation involved in DNA replication"/>
    <property type="evidence" value="ECO:0007669"/>
    <property type="project" value="TreeGrafter"/>
</dbReference>
<dbReference type="CDD" id="cd00140">
    <property type="entry name" value="beta_clamp"/>
    <property type="match status" value="1"/>
</dbReference>
<dbReference type="Gene3D" id="3.70.10.10">
    <property type="match status" value="1"/>
</dbReference>
<dbReference type="Gene3D" id="3.10.150.10">
    <property type="entry name" value="DNA Polymerase III, subunit A, domain 2"/>
    <property type="match status" value="1"/>
</dbReference>
<dbReference type="InterPro" id="IPR046938">
    <property type="entry name" value="DNA_clamp_sf"/>
</dbReference>
<dbReference type="InterPro" id="IPR001001">
    <property type="entry name" value="DNA_polIII_beta"/>
</dbReference>
<dbReference type="InterPro" id="IPR022635">
    <property type="entry name" value="DNA_polIII_beta_C"/>
</dbReference>
<dbReference type="InterPro" id="IPR022637">
    <property type="entry name" value="DNA_polIII_beta_cen"/>
</dbReference>
<dbReference type="InterPro" id="IPR022634">
    <property type="entry name" value="DNA_polIII_beta_N"/>
</dbReference>
<dbReference type="NCBIfam" id="TIGR00663">
    <property type="entry name" value="dnan"/>
    <property type="match status" value="1"/>
</dbReference>
<dbReference type="PANTHER" id="PTHR30478:SF0">
    <property type="entry name" value="BETA SLIDING CLAMP"/>
    <property type="match status" value="1"/>
</dbReference>
<dbReference type="PANTHER" id="PTHR30478">
    <property type="entry name" value="DNA POLYMERASE III SUBUNIT BETA"/>
    <property type="match status" value="1"/>
</dbReference>
<dbReference type="Pfam" id="PF00712">
    <property type="entry name" value="DNA_pol3_beta"/>
    <property type="match status" value="1"/>
</dbReference>
<dbReference type="Pfam" id="PF02767">
    <property type="entry name" value="DNA_pol3_beta_2"/>
    <property type="match status" value="1"/>
</dbReference>
<dbReference type="Pfam" id="PF02768">
    <property type="entry name" value="DNA_pol3_beta_3"/>
    <property type="match status" value="1"/>
</dbReference>
<dbReference type="PIRSF" id="PIRSF000804">
    <property type="entry name" value="DNA_pol_III_b"/>
    <property type="match status" value="1"/>
</dbReference>
<dbReference type="SMART" id="SM00480">
    <property type="entry name" value="POL3Bc"/>
    <property type="match status" value="1"/>
</dbReference>
<dbReference type="SUPFAM" id="SSF55979">
    <property type="entry name" value="DNA clamp"/>
    <property type="match status" value="3"/>
</dbReference>
<keyword id="KW-0002">3D-structure</keyword>
<keyword id="KW-0963">Cytoplasm</keyword>
<keyword id="KW-0235">DNA replication</keyword>
<keyword id="KW-0238">DNA-binding</keyword>
<keyword id="KW-0239">DNA-directed DNA polymerase</keyword>
<keyword id="KW-0548">Nucleotidyltransferase</keyword>
<keyword id="KW-0808">Transferase</keyword>